<organism>
    <name type="scientific">Leptospira interrogans serogroup Icterohaemorrhagiae serovar copenhageni (strain Fiocruz L1-130)</name>
    <dbReference type="NCBI Taxonomy" id="267671"/>
    <lineage>
        <taxon>Bacteria</taxon>
        <taxon>Pseudomonadati</taxon>
        <taxon>Spirochaetota</taxon>
        <taxon>Spirochaetia</taxon>
        <taxon>Leptospirales</taxon>
        <taxon>Leptospiraceae</taxon>
        <taxon>Leptospira</taxon>
    </lineage>
</organism>
<comment type="function">
    <text evidence="1">Functions in the biosynthesis of branched-chain amino acids. Catalyzes the dehydration of (2R,3R)-2,3-dihydroxy-3-methylpentanoate (2,3-dihydroxy-3-methylvalerate) into 2-oxo-3-methylpentanoate (2-oxo-3-methylvalerate) and of (2R)-2,3-dihydroxy-3-methylbutanoate (2,3-dihydroxyisovalerate) into 2-oxo-3-methylbutanoate (2-oxoisovalerate), the penultimate precursor to L-isoleucine and L-valine, respectively.</text>
</comment>
<comment type="catalytic activity">
    <reaction evidence="1">
        <text>(2R)-2,3-dihydroxy-3-methylbutanoate = 3-methyl-2-oxobutanoate + H2O</text>
        <dbReference type="Rhea" id="RHEA:24809"/>
        <dbReference type="ChEBI" id="CHEBI:11851"/>
        <dbReference type="ChEBI" id="CHEBI:15377"/>
        <dbReference type="ChEBI" id="CHEBI:49072"/>
        <dbReference type="EC" id="4.2.1.9"/>
    </reaction>
    <physiologicalReaction direction="left-to-right" evidence="1">
        <dbReference type="Rhea" id="RHEA:24810"/>
    </physiologicalReaction>
</comment>
<comment type="catalytic activity">
    <reaction evidence="1">
        <text>(2R,3R)-2,3-dihydroxy-3-methylpentanoate = (S)-3-methyl-2-oxopentanoate + H2O</text>
        <dbReference type="Rhea" id="RHEA:27694"/>
        <dbReference type="ChEBI" id="CHEBI:15377"/>
        <dbReference type="ChEBI" id="CHEBI:35146"/>
        <dbReference type="ChEBI" id="CHEBI:49258"/>
        <dbReference type="EC" id="4.2.1.9"/>
    </reaction>
    <physiologicalReaction direction="left-to-right" evidence="1">
        <dbReference type="Rhea" id="RHEA:27695"/>
    </physiologicalReaction>
</comment>
<comment type="cofactor">
    <cofactor evidence="1">
        <name>[2Fe-2S] cluster</name>
        <dbReference type="ChEBI" id="CHEBI:190135"/>
    </cofactor>
    <text evidence="1">Binds 1 [2Fe-2S] cluster per subunit. This cluster acts as a Lewis acid cofactor.</text>
</comment>
<comment type="cofactor">
    <cofactor evidence="1">
        <name>Mg(2+)</name>
        <dbReference type="ChEBI" id="CHEBI:18420"/>
    </cofactor>
</comment>
<comment type="pathway">
    <text evidence="1">Amino-acid biosynthesis; L-isoleucine biosynthesis; L-isoleucine from 2-oxobutanoate: step 3/4.</text>
</comment>
<comment type="pathway">
    <text evidence="1">Amino-acid biosynthesis; L-valine biosynthesis; L-valine from pyruvate: step 3/4.</text>
</comment>
<comment type="subunit">
    <text evidence="1">Homodimer.</text>
</comment>
<comment type="similarity">
    <text evidence="1">Belongs to the IlvD/Edd family.</text>
</comment>
<proteinExistence type="inferred from homology"/>
<sequence>MGDNLKKRSSMTTDGDNRAPNRAMLRAVGFTDEDFHKPMIGIASTWSEITPCNIHINKLAEKVKEGVREAGGVPQIYGTITVSDGIMMGHEGMHFSLPSREVIADSIEIVSNAMRHDGVIAIGGCDKNMPGCLMALCRIDAPSIFVYGGTILPGNCDGQDVDIVSIFEAVGKFNAGKISREEFIRIEQNAIPGAGSCGGMYTANTMSSAIEALGMSLPGSASMPAVSSRKANDCYEAGKALINLIQKGITPKQILTKKAFENAITVVLVLGGSTNAVLHLIAIAKEIGVGLTLDDFDRISKKTPHLADLKPGGKYAMTDLDKVGGVHGVMKYLLKEGMLHGDCLTVTGKTIAENLKDMPDLVPNQTIVRKKSEALHPSGPLVILKGNLAPDGAVAKISGLKKISITGPAKVFESEDDCFNAIMTDKIKPGDVIIIRYEGPKGGPGMREMLAVTSALVGKGLGEDVGLMTDGRFSGGTHGLVVGHISPEAFDGGPIAIIQNGDKVTIDSSKNLLQVEISQEEIDKRLKSWKPIEPRYKTGVLAKYVKLVQSATNGAITNLL</sequence>
<protein>
    <recommendedName>
        <fullName evidence="1">Dihydroxy-acid dehydratase</fullName>
        <shortName evidence="1">DAD</shortName>
        <ecNumber evidence="1">4.2.1.9</ecNumber>
    </recommendedName>
</protein>
<accession>Q72TC0</accession>
<dbReference type="EC" id="4.2.1.9" evidence="1"/>
<dbReference type="EMBL" id="AE016823">
    <property type="protein sequence ID" value="AAS69708.1"/>
    <property type="molecule type" value="Genomic_DNA"/>
</dbReference>
<dbReference type="RefSeq" id="WP_000502718.1">
    <property type="nucleotide sequence ID" value="NC_005823.1"/>
</dbReference>
<dbReference type="SMR" id="Q72TC0"/>
<dbReference type="GeneID" id="61144424"/>
<dbReference type="KEGG" id="lic:LIC_11101"/>
<dbReference type="HOGENOM" id="CLU_014271_4_2_12"/>
<dbReference type="UniPathway" id="UPA00047">
    <property type="reaction ID" value="UER00057"/>
</dbReference>
<dbReference type="UniPathway" id="UPA00049">
    <property type="reaction ID" value="UER00061"/>
</dbReference>
<dbReference type="Proteomes" id="UP000007037">
    <property type="component" value="Chromosome I"/>
</dbReference>
<dbReference type="GO" id="GO:0051537">
    <property type="term" value="F:2 iron, 2 sulfur cluster binding"/>
    <property type="evidence" value="ECO:0007669"/>
    <property type="project" value="UniProtKB-UniRule"/>
</dbReference>
<dbReference type="GO" id="GO:0004160">
    <property type="term" value="F:dihydroxy-acid dehydratase activity"/>
    <property type="evidence" value="ECO:0007669"/>
    <property type="project" value="UniProtKB-UniRule"/>
</dbReference>
<dbReference type="GO" id="GO:0000287">
    <property type="term" value="F:magnesium ion binding"/>
    <property type="evidence" value="ECO:0007669"/>
    <property type="project" value="UniProtKB-UniRule"/>
</dbReference>
<dbReference type="GO" id="GO:0009097">
    <property type="term" value="P:isoleucine biosynthetic process"/>
    <property type="evidence" value="ECO:0007669"/>
    <property type="project" value="UniProtKB-UniRule"/>
</dbReference>
<dbReference type="GO" id="GO:0009099">
    <property type="term" value="P:L-valine biosynthetic process"/>
    <property type="evidence" value="ECO:0007669"/>
    <property type="project" value="UniProtKB-UniRule"/>
</dbReference>
<dbReference type="FunFam" id="3.50.30.80:FF:000001">
    <property type="entry name" value="Dihydroxy-acid dehydratase"/>
    <property type="match status" value="1"/>
</dbReference>
<dbReference type="Gene3D" id="3.50.30.80">
    <property type="entry name" value="IlvD/EDD C-terminal domain-like"/>
    <property type="match status" value="1"/>
</dbReference>
<dbReference type="HAMAP" id="MF_00012">
    <property type="entry name" value="IlvD"/>
    <property type="match status" value="1"/>
</dbReference>
<dbReference type="InterPro" id="IPR050165">
    <property type="entry name" value="DHAD_IlvD/Edd"/>
</dbReference>
<dbReference type="InterPro" id="IPR042096">
    <property type="entry name" value="Dihydro-acid_dehy_C"/>
</dbReference>
<dbReference type="InterPro" id="IPR004404">
    <property type="entry name" value="DihydroxyA_deHydtase"/>
</dbReference>
<dbReference type="InterPro" id="IPR020558">
    <property type="entry name" value="DiOHA_6PGluconate_deHydtase_CS"/>
</dbReference>
<dbReference type="InterPro" id="IPR056740">
    <property type="entry name" value="ILV_EDD_C"/>
</dbReference>
<dbReference type="InterPro" id="IPR000581">
    <property type="entry name" value="ILV_EDD_N"/>
</dbReference>
<dbReference type="InterPro" id="IPR037237">
    <property type="entry name" value="IlvD/EDD_N"/>
</dbReference>
<dbReference type="NCBIfam" id="TIGR00110">
    <property type="entry name" value="ilvD"/>
    <property type="match status" value="1"/>
</dbReference>
<dbReference type="NCBIfam" id="NF002068">
    <property type="entry name" value="PRK00911.1"/>
    <property type="match status" value="1"/>
</dbReference>
<dbReference type="PANTHER" id="PTHR21000">
    <property type="entry name" value="DIHYDROXY-ACID DEHYDRATASE DAD"/>
    <property type="match status" value="1"/>
</dbReference>
<dbReference type="PANTHER" id="PTHR21000:SF5">
    <property type="entry name" value="DIHYDROXY-ACID DEHYDRATASE, MITOCHONDRIAL"/>
    <property type="match status" value="1"/>
</dbReference>
<dbReference type="Pfam" id="PF24877">
    <property type="entry name" value="ILV_EDD_C"/>
    <property type="match status" value="1"/>
</dbReference>
<dbReference type="Pfam" id="PF00920">
    <property type="entry name" value="ILVD_EDD_N"/>
    <property type="match status" value="1"/>
</dbReference>
<dbReference type="SUPFAM" id="SSF143975">
    <property type="entry name" value="IlvD/EDD N-terminal domain-like"/>
    <property type="match status" value="1"/>
</dbReference>
<dbReference type="SUPFAM" id="SSF52016">
    <property type="entry name" value="LeuD/IlvD-like"/>
    <property type="match status" value="1"/>
</dbReference>
<dbReference type="PROSITE" id="PS00886">
    <property type="entry name" value="ILVD_EDD_1"/>
    <property type="match status" value="1"/>
</dbReference>
<dbReference type="PROSITE" id="PS00887">
    <property type="entry name" value="ILVD_EDD_2"/>
    <property type="match status" value="1"/>
</dbReference>
<gene>
    <name evidence="1" type="primary">ilvD</name>
    <name type="ordered locus">LIC_11101</name>
</gene>
<keyword id="KW-0001">2Fe-2S</keyword>
<keyword id="KW-0028">Amino-acid biosynthesis</keyword>
<keyword id="KW-0100">Branched-chain amino acid biosynthesis</keyword>
<keyword id="KW-0408">Iron</keyword>
<keyword id="KW-0411">Iron-sulfur</keyword>
<keyword id="KW-0456">Lyase</keyword>
<keyword id="KW-0460">Magnesium</keyword>
<keyword id="KW-0479">Metal-binding</keyword>
<name>ILVD_LEPIC</name>
<reference key="1">
    <citation type="journal article" date="2004" name="J. Bacteriol.">
        <title>Comparative genomics of two Leptospira interrogans serovars reveals novel insights into physiology and pathogenesis.</title>
        <authorList>
            <person name="Nascimento A.L.T.O."/>
            <person name="Ko A.I."/>
            <person name="Martins E.A.L."/>
            <person name="Monteiro-Vitorello C.B."/>
            <person name="Ho P.L."/>
            <person name="Haake D.A."/>
            <person name="Verjovski-Almeida S."/>
            <person name="Hartskeerl R.A."/>
            <person name="Marques M.V."/>
            <person name="Oliveira M.C."/>
            <person name="Menck C.F.M."/>
            <person name="Leite L.C.C."/>
            <person name="Carrer H."/>
            <person name="Coutinho L.L."/>
            <person name="Degrave W.M."/>
            <person name="Dellagostin O.A."/>
            <person name="El-Dorry H."/>
            <person name="Ferro E.S."/>
            <person name="Ferro M.I.T."/>
            <person name="Furlan L.R."/>
            <person name="Gamberini M."/>
            <person name="Giglioti E.A."/>
            <person name="Goes-Neto A."/>
            <person name="Goldman G.H."/>
            <person name="Goldman M.H.S."/>
            <person name="Harakava R."/>
            <person name="Jeronimo S.M.B."/>
            <person name="Junqueira-de-Azevedo I.L.M."/>
            <person name="Kimura E.T."/>
            <person name="Kuramae E.E."/>
            <person name="Lemos E.G.M."/>
            <person name="Lemos M.V.F."/>
            <person name="Marino C.L."/>
            <person name="Nunes L.R."/>
            <person name="de Oliveira R.C."/>
            <person name="Pereira G.G."/>
            <person name="Reis M.S."/>
            <person name="Schriefer A."/>
            <person name="Siqueira W.J."/>
            <person name="Sommer P."/>
            <person name="Tsai S.M."/>
            <person name="Simpson A.J.G."/>
            <person name="Ferro J.A."/>
            <person name="Camargo L.E.A."/>
            <person name="Kitajima J.P."/>
            <person name="Setubal J.C."/>
            <person name="Van Sluys M.A."/>
        </authorList>
    </citation>
    <scope>NUCLEOTIDE SEQUENCE [LARGE SCALE GENOMIC DNA]</scope>
    <source>
        <strain>Fiocruz L1-130</strain>
    </source>
</reference>
<evidence type="ECO:0000255" key="1">
    <source>
        <dbReference type="HAMAP-Rule" id="MF_00012"/>
    </source>
</evidence>
<evidence type="ECO:0000256" key="2">
    <source>
        <dbReference type="SAM" id="MobiDB-lite"/>
    </source>
</evidence>
<feature type="chain" id="PRO_0000103474" description="Dihydroxy-acid dehydratase">
    <location>
        <begin position="1"/>
        <end position="560"/>
    </location>
</feature>
<feature type="region of interest" description="Disordered" evidence="2">
    <location>
        <begin position="1"/>
        <end position="20"/>
    </location>
</feature>
<feature type="active site" description="Proton acceptor" evidence="1">
    <location>
        <position position="474"/>
    </location>
</feature>
<feature type="binding site" evidence="1">
    <location>
        <position position="52"/>
    </location>
    <ligand>
        <name>[2Fe-2S] cluster</name>
        <dbReference type="ChEBI" id="CHEBI:190135"/>
    </ligand>
</feature>
<feature type="binding site" evidence="1">
    <location>
        <position position="84"/>
    </location>
    <ligand>
        <name>Mg(2+)</name>
        <dbReference type="ChEBI" id="CHEBI:18420"/>
    </ligand>
</feature>
<feature type="binding site" evidence="1">
    <location>
        <position position="125"/>
    </location>
    <ligand>
        <name>[2Fe-2S] cluster</name>
        <dbReference type="ChEBI" id="CHEBI:190135"/>
    </ligand>
</feature>
<feature type="binding site" evidence="1">
    <location>
        <position position="126"/>
    </location>
    <ligand>
        <name>Mg(2+)</name>
        <dbReference type="ChEBI" id="CHEBI:18420"/>
    </ligand>
</feature>
<feature type="binding site" description="via carbamate group" evidence="1">
    <location>
        <position position="127"/>
    </location>
    <ligand>
        <name>Mg(2+)</name>
        <dbReference type="ChEBI" id="CHEBI:18420"/>
    </ligand>
</feature>
<feature type="binding site" evidence="1">
    <location>
        <position position="197"/>
    </location>
    <ligand>
        <name>[2Fe-2S] cluster</name>
        <dbReference type="ChEBI" id="CHEBI:190135"/>
    </ligand>
</feature>
<feature type="binding site" evidence="1">
    <location>
        <position position="448"/>
    </location>
    <ligand>
        <name>Mg(2+)</name>
        <dbReference type="ChEBI" id="CHEBI:18420"/>
    </ligand>
</feature>
<feature type="modified residue" description="N6-carboxylysine" evidence="1">
    <location>
        <position position="127"/>
    </location>
</feature>